<gene>
    <name evidence="1" type="primary">xerC</name>
    <name type="ordered locus">SYNAS_14230</name>
    <name type="ORF">SYN_02151</name>
</gene>
<organism>
    <name type="scientific">Syntrophus aciditrophicus (strain SB)</name>
    <dbReference type="NCBI Taxonomy" id="56780"/>
    <lineage>
        <taxon>Bacteria</taxon>
        <taxon>Pseudomonadati</taxon>
        <taxon>Thermodesulfobacteriota</taxon>
        <taxon>Syntrophia</taxon>
        <taxon>Syntrophales</taxon>
        <taxon>Syntrophaceae</taxon>
        <taxon>Syntrophus</taxon>
    </lineage>
</organism>
<evidence type="ECO:0000255" key="1">
    <source>
        <dbReference type="HAMAP-Rule" id="MF_01808"/>
    </source>
</evidence>
<evidence type="ECO:0000255" key="2">
    <source>
        <dbReference type="PROSITE-ProRule" id="PRU01246"/>
    </source>
</evidence>
<evidence type="ECO:0000255" key="3">
    <source>
        <dbReference type="PROSITE-ProRule" id="PRU01248"/>
    </source>
</evidence>
<proteinExistence type="inferred from homology"/>
<keyword id="KW-0131">Cell cycle</keyword>
<keyword id="KW-0132">Cell division</keyword>
<keyword id="KW-0159">Chromosome partition</keyword>
<keyword id="KW-0963">Cytoplasm</keyword>
<keyword id="KW-0229">DNA integration</keyword>
<keyword id="KW-0233">DNA recombination</keyword>
<keyword id="KW-0238">DNA-binding</keyword>
<keyword id="KW-1185">Reference proteome</keyword>
<feature type="chain" id="PRO_1000215960" description="Tyrosine recombinase XerC">
    <location>
        <begin position="1"/>
        <end position="310"/>
    </location>
</feature>
<feature type="domain" description="Core-binding (CB)" evidence="3">
    <location>
        <begin position="1"/>
        <end position="92"/>
    </location>
</feature>
<feature type="domain" description="Tyr recombinase" evidence="2">
    <location>
        <begin position="113"/>
        <end position="300"/>
    </location>
</feature>
<feature type="active site" evidence="1">
    <location>
        <position position="153"/>
    </location>
</feature>
<feature type="active site" evidence="1">
    <location>
        <position position="177"/>
    </location>
</feature>
<feature type="active site" evidence="1">
    <location>
        <position position="252"/>
    </location>
</feature>
<feature type="active site" evidence="1">
    <location>
        <position position="255"/>
    </location>
</feature>
<feature type="active site" evidence="1">
    <location>
        <position position="278"/>
    </location>
</feature>
<feature type="active site" description="O-(3'-phospho-DNA)-tyrosine intermediate" evidence="1">
    <location>
        <position position="287"/>
    </location>
</feature>
<name>XERC_SYNAS</name>
<protein>
    <recommendedName>
        <fullName evidence="1">Tyrosine recombinase XerC</fullName>
    </recommendedName>
</protein>
<sequence>MDELIKEFDRYMDLERNLSTHTRKNYLSDLNQFKIYLEENHRVPTELKTEAWQNVDYMMVRAFLGALYRRRVKKVTIARKLASLRAFFKYLHQKRKIQCNPLEAVSTPRTEKYIPAVLSVDEIFVLLNLPFPEDVFGLRDRAILELFYSSGIRVSELTGINEEDMDFSQGLIRIRGKGKKERIVPIGQPASEAVQRYMMKKPGSETSGKAVATCPVPLFVNRRQGRLSARSVARILSKYVSMSGLQKQISPHTLRHSFATHLMDAGADLRSIQELLGHESLSTTQKYTAVSVNRLMAVYDRAHPKARGGH</sequence>
<comment type="function">
    <text evidence="1">Site-specific tyrosine recombinase, which acts by catalyzing the cutting and rejoining of the recombining DNA molecules. The XerC-XerD complex is essential to convert dimers of the bacterial chromosome into monomers to permit their segregation at cell division. It also contributes to the segregational stability of plasmids.</text>
</comment>
<comment type="subunit">
    <text evidence="1">Forms a cyclic heterotetrameric complex composed of two molecules of XerC and two molecules of XerD.</text>
</comment>
<comment type="subcellular location">
    <subcellularLocation>
        <location evidence="1">Cytoplasm</location>
    </subcellularLocation>
</comment>
<comment type="similarity">
    <text evidence="1">Belongs to the 'phage' integrase family. XerC subfamily.</text>
</comment>
<dbReference type="EMBL" id="CP000252">
    <property type="protein sequence ID" value="ABC77302.1"/>
    <property type="molecule type" value="Genomic_DNA"/>
</dbReference>
<dbReference type="RefSeq" id="WP_011417324.1">
    <property type="nucleotide sequence ID" value="NC_007759.1"/>
</dbReference>
<dbReference type="SMR" id="Q2LT92"/>
<dbReference type="FunCoup" id="Q2LT92">
    <property type="interactions" value="46"/>
</dbReference>
<dbReference type="STRING" id="56780.SYN_02151"/>
<dbReference type="KEGG" id="sat:SYN_02151"/>
<dbReference type="eggNOG" id="COG4974">
    <property type="taxonomic scope" value="Bacteria"/>
</dbReference>
<dbReference type="HOGENOM" id="CLU_027562_9_0_7"/>
<dbReference type="InParanoid" id="Q2LT92"/>
<dbReference type="OrthoDB" id="9801717at2"/>
<dbReference type="Proteomes" id="UP000001933">
    <property type="component" value="Chromosome"/>
</dbReference>
<dbReference type="GO" id="GO:0005737">
    <property type="term" value="C:cytoplasm"/>
    <property type="evidence" value="ECO:0007669"/>
    <property type="project" value="UniProtKB-SubCell"/>
</dbReference>
<dbReference type="GO" id="GO:0003677">
    <property type="term" value="F:DNA binding"/>
    <property type="evidence" value="ECO:0007669"/>
    <property type="project" value="UniProtKB-KW"/>
</dbReference>
<dbReference type="GO" id="GO:0009037">
    <property type="term" value="F:tyrosine-based site-specific recombinase activity"/>
    <property type="evidence" value="ECO:0007669"/>
    <property type="project" value="UniProtKB-UniRule"/>
</dbReference>
<dbReference type="GO" id="GO:0051301">
    <property type="term" value="P:cell division"/>
    <property type="evidence" value="ECO:0007669"/>
    <property type="project" value="UniProtKB-KW"/>
</dbReference>
<dbReference type="GO" id="GO:0007059">
    <property type="term" value="P:chromosome segregation"/>
    <property type="evidence" value="ECO:0007669"/>
    <property type="project" value="UniProtKB-UniRule"/>
</dbReference>
<dbReference type="GO" id="GO:0006313">
    <property type="term" value="P:DNA transposition"/>
    <property type="evidence" value="ECO:0007669"/>
    <property type="project" value="UniProtKB-UniRule"/>
</dbReference>
<dbReference type="CDD" id="cd00798">
    <property type="entry name" value="INT_XerDC_C"/>
    <property type="match status" value="1"/>
</dbReference>
<dbReference type="Gene3D" id="1.10.150.130">
    <property type="match status" value="1"/>
</dbReference>
<dbReference type="Gene3D" id="1.10.443.10">
    <property type="entry name" value="Intergrase catalytic core"/>
    <property type="match status" value="1"/>
</dbReference>
<dbReference type="HAMAP" id="MF_01808">
    <property type="entry name" value="Recomb_XerC_XerD"/>
    <property type="match status" value="1"/>
</dbReference>
<dbReference type="InterPro" id="IPR044068">
    <property type="entry name" value="CB"/>
</dbReference>
<dbReference type="InterPro" id="IPR011010">
    <property type="entry name" value="DNA_brk_join_enz"/>
</dbReference>
<dbReference type="InterPro" id="IPR013762">
    <property type="entry name" value="Integrase-like_cat_sf"/>
</dbReference>
<dbReference type="InterPro" id="IPR002104">
    <property type="entry name" value="Integrase_catalytic"/>
</dbReference>
<dbReference type="InterPro" id="IPR010998">
    <property type="entry name" value="Integrase_recombinase_N"/>
</dbReference>
<dbReference type="InterPro" id="IPR004107">
    <property type="entry name" value="Integrase_SAM-like_N"/>
</dbReference>
<dbReference type="InterPro" id="IPR011931">
    <property type="entry name" value="Recomb_XerC"/>
</dbReference>
<dbReference type="InterPro" id="IPR023009">
    <property type="entry name" value="Tyrosine_recombinase_XerC/XerD"/>
</dbReference>
<dbReference type="InterPro" id="IPR050090">
    <property type="entry name" value="Tyrosine_recombinase_XerCD"/>
</dbReference>
<dbReference type="NCBIfam" id="NF001399">
    <property type="entry name" value="PRK00283.1"/>
    <property type="match status" value="1"/>
</dbReference>
<dbReference type="NCBIfam" id="NF040815">
    <property type="entry name" value="recomb_XerA_Arch"/>
    <property type="match status" value="1"/>
</dbReference>
<dbReference type="NCBIfam" id="TIGR02224">
    <property type="entry name" value="recomb_XerC"/>
    <property type="match status" value="1"/>
</dbReference>
<dbReference type="PANTHER" id="PTHR30349">
    <property type="entry name" value="PHAGE INTEGRASE-RELATED"/>
    <property type="match status" value="1"/>
</dbReference>
<dbReference type="PANTHER" id="PTHR30349:SF77">
    <property type="entry name" value="TYROSINE RECOMBINASE XERC"/>
    <property type="match status" value="1"/>
</dbReference>
<dbReference type="Pfam" id="PF02899">
    <property type="entry name" value="Phage_int_SAM_1"/>
    <property type="match status" value="1"/>
</dbReference>
<dbReference type="Pfam" id="PF00589">
    <property type="entry name" value="Phage_integrase"/>
    <property type="match status" value="1"/>
</dbReference>
<dbReference type="SUPFAM" id="SSF56349">
    <property type="entry name" value="DNA breaking-rejoining enzymes"/>
    <property type="match status" value="1"/>
</dbReference>
<dbReference type="SUPFAM" id="SSF47823">
    <property type="entry name" value="lambda integrase-like, N-terminal domain"/>
    <property type="match status" value="1"/>
</dbReference>
<dbReference type="PROSITE" id="PS51900">
    <property type="entry name" value="CB"/>
    <property type="match status" value="1"/>
</dbReference>
<dbReference type="PROSITE" id="PS51898">
    <property type="entry name" value="TYR_RECOMBINASE"/>
    <property type="match status" value="1"/>
</dbReference>
<reference key="1">
    <citation type="journal article" date="2007" name="Proc. Natl. Acad. Sci. U.S.A.">
        <title>The genome of Syntrophus aciditrophicus: life at the thermodynamic limit of microbial growth.</title>
        <authorList>
            <person name="McInerney M.J."/>
            <person name="Rohlin L."/>
            <person name="Mouttaki H."/>
            <person name="Kim U."/>
            <person name="Krupp R.S."/>
            <person name="Rios-Hernandez L."/>
            <person name="Sieber J."/>
            <person name="Struchtemeyer C.G."/>
            <person name="Bhattacharyya A."/>
            <person name="Campbell J.W."/>
            <person name="Gunsalus R.P."/>
        </authorList>
    </citation>
    <scope>NUCLEOTIDE SEQUENCE [LARGE SCALE GENOMIC DNA]</scope>
    <source>
        <strain>SB</strain>
    </source>
</reference>
<accession>Q2LT92</accession>